<accession>Q1JDF4</accession>
<comment type="function">
    <text evidence="1">Negatively regulates transcription of bacterial ribonucleotide reductase nrd genes and operons by binding to NrdR-boxes.</text>
</comment>
<comment type="cofactor">
    <cofactor evidence="1">
        <name>Zn(2+)</name>
        <dbReference type="ChEBI" id="CHEBI:29105"/>
    </cofactor>
    <text evidence="1">Binds 1 zinc ion.</text>
</comment>
<comment type="similarity">
    <text evidence="1">Belongs to the NrdR family.</text>
</comment>
<protein>
    <recommendedName>
        <fullName evidence="1">Transcriptional repressor NrdR</fullName>
    </recommendedName>
</protein>
<organism>
    <name type="scientific">Streptococcus pyogenes serotype M12 (strain MGAS2096)</name>
    <dbReference type="NCBI Taxonomy" id="370553"/>
    <lineage>
        <taxon>Bacteria</taxon>
        <taxon>Bacillati</taxon>
        <taxon>Bacillota</taxon>
        <taxon>Bacilli</taxon>
        <taxon>Lactobacillales</taxon>
        <taxon>Streptococcaceae</taxon>
        <taxon>Streptococcus</taxon>
    </lineage>
</organism>
<reference key="1">
    <citation type="journal article" date="2006" name="Proc. Natl. Acad. Sci. U.S.A.">
        <title>Molecular genetic anatomy of inter- and intraserotype variation in the human bacterial pathogen group A Streptococcus.</title>
        <authorList>
            <person name="Beres S.B."/>
            <person name="Richter E.W."/>
            <person name="Nagiec M.J."/>
            <person name="Sumby P."/>
            <person name="Porcella S.F."/>
            <person name="DeLeo F.R."/>
            <person name="Musser J.M."/>
        </authorList>
    </citation>
    <scope>NUCLEOTIDE SEQUENCE [LARGE SCALE GENOMIC DNA]</scope>
    <source>
        <strain>MGAS2096</strain>
    </source>
</reference>
<sequence>MRCPKCNYHKSSVVDSRQAEDGNTIRRRRECEQCHTRFTTFERVEELPLLVIKKDGTREQFSRDKILNGVVQSAQKRPVSSTDIENVISRIEQEVRTTYENEVSSTAIGNLVMDELAELDEITYVRFASVYKSFKDVDEIEELLQQITNRVRGKKKRLNNDETN</sequence>
<dbReference type="EMBL" id="CP000261">
    <property type="protein sequence ID" value="ABF35354.1"/>
    <property type="molecule type" value="Genomic_DNA"/>
</dbReference>
<dbReference type="SMR" id="Q1JDF4"/>
<dbReference type="KEGG" id="spj:MGAS2096_Spy0302"/>
<dbReference type="HOGENOM" id="CLU_108412_0_0_9"/>
<dbReference type="GO" id="GO:0005524">
    <property type="term" value="F:ATP binding"/>
    <property type="evidence" value="ECO:0007669"/>
    <property type="project" value="UniProtKB-KW"/>
</dbReference>
<dbReference type="GO" id="GO:0003677">
    <property type="term" value="F:DNA binding"/>
    <property type="evidence" value="ECO:0007669"/>
    <property type="project" value="UniProtKB-KW"/>
</dbReference>
<dbReference type="GO" id="GO:0008270">
    <property type="term" value="F:zinc ion binding"/>
    <property type="evidence" value="ECO:0007669"/>
    <property type="project" value="UniProtKB-UniRule"/>
</dbReference>
<dbReference type="GO" id="GO:0045892">
    <property type="term" value="P:negative regulation of DNA-templated transcription"/>
    <property type="evidence" value="ECO:0007669"/>
    <property type="project" value="UniProtKB-UniRule"/>
</dbReference>
<dbReference type="HAMAP" id="MF_00440">
    <property type="entry name" value="NrdR"/>
    <property type="match status" value="1"/>
</dbReference>
<dbReference type="InterPro" id="IPR005144">
    <property type="entry name" value="ATP-cone_dom"/>
</dbReference>
<dbReference type="InterPro" id="IPR055173">
    <property type="entry name" value="NrdR-like_N"/>
</dbReference>
<dbReference type="InterPro" id="IPR003796">
    <property type="entry name" value="RNR_NrdR-like"/>
</dbReference>
<dbReference type="NCBIfam" id="TIGR00244">
    <property type="entry name" value="transcriptional regulator NrdR"/>
    <property type="match status" value="1"/>
</dbReference>
<dbReference type="PANTHER" id="PTHR30455">
    <property type="entry name" value="TRANSCRIPTIONAL REPRESSOR NRDR"/>
    <property type="match status" value="1"/>
</dbReference>
<dbReference type="PANTHER" id="PTHR30455:SF2">
    <property type="entry name" value="TRANSCRIPTIONAL REPRESSOR NRDR"/>
    <property type="match status" value="1"/>
</dbReference>
<dbReference type="Pfam" id="PF03477">
    <property type="entry name" value="ATP-cone"/>
    <property type="match status" value="1"/>
</dbReference>
<dbReference type="Pfam" id="PF22811">
    <property type="entry name" value="Zn_ribbon_NrdR"/>
    <property type="match status" value="1"/>
</dbReference>
<dbReference type="PROSITE" id="PS51161">
    <property type="entry name" value="ATP_CONE"/>
    <property type="match status" value="1"/>
</dbReference>
<feature type="chain" id="PRO_0000264217" description="Transcriptional repressor NrdR">
    <location>
        <begin position="1"/>
        <end position="164"/>
    </location>
</feature>
<feature type="domain" description="ATP-cone" evidence="1">
    <location>
        <begin position="49"/>
        <end position="139"/>
    </location>
</feature>
<feature type="zinc finger region" evidence="1">
    <location>
        <begin position="3"/>
        <end position="34"/>
    </location>
</feature>
<proteinExistence type="inferred from homology"/>
<keyword id="KW-0067">ATP-binding</keyword>
<keyword id="KW-0238">DNA-binding</keyword>
<keyword id="KW-0479">Metal-binding</keyword>
<keyword id="KW-0547">Nucleotide-binding</keyword>
<keyword id="KW-0678">Repressor</keyword>
<keyword id="KW-0804">Transcription</keyword>
<keyword id="KW-0805">Transcription regulation</keyword>
<keyword id="KW-0862">Zinc</keyword>
<keyword id="KW-0863">Zinc-finger</keyword>
<name>NRDR_STRPB</name>
<gene>
    <name evidence="1" type="primary">nrdR</name>
    <name type="ordered locus">MGAS2096_Spy0302</name>
</gene>
<evidence type="ECO:0000255" key="1">
    <source>
        <dbReference type="HAMAP-Rule" id="MF_00440"/>
    </source>
</evidence>